<accession>P0CA38</accession>
<protein>
    <recommendedName>
        <fullName>Uncharacterized protein C129R</fullName>
        <shortName>pC129R</shortName>
        <ecNumber evidence="1">3.1.4.-</ecNumber>
    </recommendedName>
</protein>
<reference key="1">
    <citation type="submission" date="2003-03" db="EMBL/GenBank/DDBJ databases">
        <title>African swine fever virus genomes.</title>
        <authorList>
            <person name="Kutish G.F."/>
            <person name="Rock D.L."/>
        </authorList>
    </citation>
    <scope>NUCLEOTIDE SEQUENCE [LARGE SCALE GENOMIC DNA]</scope>
</reference>
<sequence>MEHPSTNYTLEQQHEKLKNYVLIPKHLWSYIKYGTHVRYYTKQNVFRVGGFVLQNPYEAVVKNEVKTAIRLQNSFNTKAKGHVTWAVSYDDISKLYAKPDAIMLTIQENVEKALHALNQNVLTLASKIR</sequence>
<comment type="function">
    <text evidence="1">Plays a role in the inhibition of type I interferon signaling pathway. Mechanistically, specifically interacts with 2',3'-cGAMP and cleaves it via its phosphodiesterase activity. In turn, prevents 2',3'-cGAMP interaction with host ER-resident STING1 leading to inhibition of downstream signaling pathway and type I interferon production.</text>
</comment>
<comment type="subcellular location">
    <subcellularLocation>
        <location evidence="1">Virion</location>
    </subcellularLocation>
</comment>
<comment type="similarity">
    <text evidence="2">Belongs to the asfivirus C129R family.</text>
</comment>
<feature type="chain" id="PRO_0000373508" description="Uncharacterized protein C129R">
    <location>
        <begin position="1"/>
        <end position="129"/>
    </location>
</feature>
<keyword id="KW-0945">Host-virus interaction</keyword>
<keyword id="KW-0378">Hydrolase</keyword>
<keyword id="KW-1090">Inhibition of host innate immune response by virus</keyword>
<keyword id="KW-1114">Inhibition of host interferon signaling pathway by virus</keyword>
<keyword id="KW-0922">Interferon antiviral system evasion</keyword>
<keyword id="KW-0899">Viral immunoevasion</keyword>
<keyword id="KW-0946">Virion</keyword>
<gene>
    <name type="ordered locus">Pret-074</name>
</gene>
<organismHost>
    <name type="scientific">Ornithodoros</name>
    <name type="common">relapsing fever ticks</name>
    <dbReference type="NCBI Taxonomy" id="6937"/>
</organismHost>
<organismHost>
    <name type="scientific">Phacochoerus aethiopicus</name>
    <name type="common">Warthog</name>
    <dbReference type="NCBI Taxonomy" id="85517"/>
</organismHost>
<organismHost>
    <name type="scientific">Phacochoerus africanus</name>
    <name type="common">Warthog</name>
    <dbReference type="NCBI Taxonomy" id="41426"/>
</organismHost>
<organismHost>
    <name type="scientific">Potamochoerus larvatus</name>
    <name type="common">Bushpig</name>
    <dbReference type="NCBI Taxonomy" id="273792"/>
</organismHost>
<organismHost>
    <name type="scientific">Sus scrofa</name>
    <name type="common">Pig</name>
    <dbReference type="NCBI Taxonomy" id="9823"/>
</organismHost>
<proteinExistence type="inferred from homology"/>
<dbReference type="EC" id="3.1.4.-" evidence="1"/>
<dbReference type="EMBL" id="AY261363">
    <property type="status" value="NOT_ANNOTATED_CDS"/>
    <property type="molecule type" value="Genomic_DNA"/>
</dbReference>
<dbReference type="Proteomes" id="UP000000859">
    <property type="component" value="Segment"/>
</dbReference>
<dbReference type="GO" id="GO:0044423">
    <property type="term" value="C:virion component"/>
    <property type="evidence" value="ECO:0007669"/>
    <property type="project" value="UniProtKB-KW"/>
</dbReference>
<dbReference type="GO" id="GO:0016787">
    <property type="term" value="F:hydrolase activity"/>
    <property type="evidence" value="ECO:0007669"/>
    <property type="project" value="UniProtKB-KW"/>
</dbReference>
<dbReference type="GO" id="GO:0052170">
    <property type="term" value="P:symbiont-mediated suppression of host innate immune response"/>
    <property type="evidence" value="ECO:0007669"/>
    <property type="project" value="UniProtKB-KW"/>
</dbReference>
<dbReference type="GO" id="GO:0039502">
    <property type="term" value="P:symbiont-mediated suppression of host type I interferon-mediated signaling pathway"/>
    <property type="evidence" value="ECO:0007669"/>
    <property type="project" value="UniProtKB-KW"/>
</dbReference>
<organism>
    <name type="scientific">African swine fever virus (isolate Tick/South Africa/Pretoriuskop Pr4/1996)</name>
    <name type="common">ASFV</name>
    <dbReference type="NCBI Taxonomy" id="561443"/>
    <lineage>
        <taxon>Viruses</taxon>
        <taxon>Varidnaviria</taxon>
        <taxon>Bamfordvirae</taxon>
        <taxon>Nucleocytoviricota</taxon>
        <taxon>Pokkesviricetes</taxon>
        <taxon>Asfuvirales</taxon>
        <taxon>Asfarviridae</taxon>
        <taxon>Asfivirus</taxon>
        <taxon>African swine fever virus</taxon>
    </lineage>
</organism>
<evidence type="ECO:0000250" key="1">
    <source>
        <dbReference type="UniProtKB" id="Q65154"/>
    </source>
</evidence>
<evidence type="ECO:0000305" key="2"/>
<name>VF129_ASFP4</name>